<accession>P26501</accession>
<keyword id="KW-0106">Calcium</keyword>
<keyword id="KW-0903">Direct protein sequencing</keyword>
<keyword id="KW-1015">Disulfide bond</keyword>
<keyword id="KW-0326">Glycosidase</keyword>
<keyword id="KW-0378">Hydrolase</keyword>
<keyword id="KW-0479">Metal-binding</keyword>
<keyword id="KW-0732">Signal</keyword>
<feature type="signal peptide" evidence="2">
    <location>
        <begin position="1"/>
        <end position="26"/>
    </location>
</feature>
<feature type="chain" id="PRO_0000001425" description="Isoamylase">
    <location>
        <begin position="27"/>
        <end position="776"/>
    </location>
</feature>
<feature type="active site" description="Nucleophile" evidence="1">
    <location>
        <position position="401"/>
    </location>
</feature>
<feature type="active site" description="Proton donor" evidence="1">
    <location>
        <position position="461"/>
    </location>
</feature>
<feature type="binding site" evidence="1">
    <location>
        <position position="154"/>
    </location>
    <ligand>
        <name>Ca(2+)</name>
        <dbReference type="ChEBI" id="CHEBI:29108"/>
    </ligand>
</feature>
<feature type="binding site" evidence="1">
    <location>
        <position position="255"/>
    </location>
    <ligand>
        <name>Ca(2+)</name>
        <dbReference type="ChEBI" id="CHEBI:29108"/>
    </ligand>
</feature>
<feature type="binding site" evidence="1">
    <location>
        <position position="256"/>
    </location>
    <ligand>
        <name>Ca(2+)</name>
        <dbReference type="ChEBI" id="CHEBI:29108"/>
    </ligand>
</feature>
<feature type="binding site" evidence="1">
    <location>
        <position position="258"/>
    </location>
    <ligand>
        <name>Ca(2+)</name>
        <dbReference type="ChEBI" id="CHEBI:29108"/>
    </ligand>
</feature>
<feature type="binding site" evidence="1">
    <location>
        <position position="285"/>
    </location>
    <ligand>
        <name>Ca(2+)</name>
        <dbReference type="ChEBI" id="CHEBI:29108"/>
    </ligand>
</feature>
<feature type="site" description="Transition state stabilizer" evidence="1">
    <location>
        <position position="536"/>
    </location>
</feature>
<feature type="disulfide bond" evidence="1">
    <location>
        <begin position="410"/>
        <end position="422"/>
    </location>
</feature>
<feature type="disulfide bond" evidence="1">
    <location>
        <begin position="546"/>
        <end position="616"/>
    </location>
</feature>
<feature type="disulfide bond" evidence="1">
    <location>
        <begin position="738"/>
        <end position="766"/>
    </location>
</feature>
<sequence>MKCPKILAALLGCAVLAGVPAMPAHAAINSMSLGASYDAQQANITFRVYSSQATRIVLYLYSAGYGVQESATYTLSPAGSGVWAVTVPVSSIKAAGITGAVYYGYRAWGPNWPYASNWGKGSQAGFVSDVDANGDRFNPNKLLLDPYAQEVSQDPLNPSNQNGNVFASGASYRTTDSGIYAPKGVVLVPSTQSTGTKPTRAQKDDVIYEVHVRGFTEQDTSIPAQYRGTYYGAGLKASYLASLGVTAVEFLPVQETQNDANDVVPNSDANQNYWGYMTENYFSPDRRYAYNKAAGGPTAEFQAMVQAFHNAGIKVYMDVVYNHTAEGGTWTSSDPTTATIYSWRGLDNTTYYELTSGNQYFYDNTGIGANFNTYNTVAQNLIVDSLAYWANTMGVDGFRFDLASVLGNSCLNGAYTASAPNCPNGGYNFDAADSNVAINRILREFTVRPAAGGSGLDLFAEPWAIGGNSYQLGGFPQGWSEWNGLFRDSLRQAQNELGSMTIYVTQDANDFSGSSNLFQSSGRSPWNSINFIDVHDGMTLKDVYSCNGANNSQAWPYGPSDGGTSTNYSWDQGMSAGTGAAVDQRRAARTGMAFEMLSAGTPLMQGGDEYLRTLQCNNNAYNLDSSANWLTYSWTTDQSNFYTFAQRLIAFRKAHPALRPSSWYSGSQLTWYQPSGAVADSNYWNNTSNYAIAYAINGPSLGDSNSIYVAYNGWSSSVTFTLPAPPSGTQWYRVTDTCDWNDGASTFVAPGSETLIGGAGTTYGQCGQSLLLLISK</sequence>
<dbReference type="EC" id="3.2.1.68"/>
<dbReference type="EMBL" id="M25247">
    <property type="protein sequence ID" value="AAA25855.1"/>
    <property type="molecule type" value="Genomic_DNA"/>
</dbReference>
<dbReference type="SMR" id="P26501"/>
<dbReference type="CAZy" id="CBM48">
    <property type="family name" value="Carbohydrate-Binding Module Family 48"/>
</dbReference>
<dbReference type="CAZy" id="GH13">
    <property type="family name" value="Glycoside Hydrolase Family 13"/>
</dbReference>
<dbReference type="GO" id="GO:0019156">
    <property type="term" value="F:isoamylase activity"/>
    <property type="evidence" value="ECO:0007669"/>
    <property type="project" value="UniProtKB-EC"/>
</dbReference>
<dbReference type="GO" id="GO:0046872">
    <property type="term" value="F:metal ion binding"/>
    <property type="evidence" value="ECO:0007669"/>
    <property type="project" value="UniProtKB-KW"/>
</dbReference>
<dbReference type="GO" id="GO:0005975">
    <property type="term" value="P:carbohydrate metabolic process"/>
    <property type="evidence" value="ECO:0007669"/>
    <property type="project" value="InterPro"/>
</dbReference>
<dbReference type="CDD" id="cd11326">
    <property type="entry name" value="AmyAc_Glg_debranch"/>
    <property type="match status" value="1"/>
</dbReference>
<dbReference type="CDD" id="cd02856">
    <property type="entry name" value="E_set_GDE_Isoamylase_N"/>
    <property type="match status" value="1"/>
</dbReference>
<dbReference type="Gene3D" id="3.20.20.80">
    <property type="entry name" value="Glycosidases"/>
    <property type="match status" value="1"/>
</dbReference>
<dbReference type="Gene3D" id="2.60.40.1180">
    <property type="entry name" value="Golgi alpha-mannosidase II"/>
    <property type="match status" value="1"/>
</dbReference>
<dbReference type="Gene3D" id="2.60.40.10">
    <property type="entry name" value="Immunoglobulins"/>
    <property type="match status" value="1"/>
</dbReference>
<dbReference type="InterPro" id="IPR044505">
    <property type="entry name" value="GlgX_Isoamylase_N_E_set"/>
</dbReference>
<dbReference type="InterPro" id="IPR006047">
    <property type="entry name" value="Glyco_hydro_13_cat_dom"/>
</dbReference>
<dbReference type="InterPro" id="IPR004193">
    <property type="entry name" value="Glyco_hydro_13_N"/>
</dbReference>
<dbReference type="InterPro" id="IPR013780">
    <property type="entry name" value="Glyco_hydro_b"/>
</dbReference>
<dbReference type="InterPro" id="IPR017853">
    <property type="entry name" value="Glycoside_hydrolase_SF"/>
</dbReference>
<dbReference type="InterPro" id="IPR013783">
    <property type="entry name" value="Ig-like_fold"/>
</dbReference>
<dbReference type="InterPro" id="IPR014756">
    <property type="entry name" value="Ig_E-set"/>
</dbReference>
<dbReference type="InterPro" id="IPR048644">
    <property type="entry name" value="Isoamylase_C"/>
</dbReference>
<dbReference type="PANTHER" id="PTHR43002">
    <property type="entry name" value="GLYCOGEN DEBRANCHING ENZYME"/>
    <property type="match status" value="1"/>
</dbReference>
<dbReference type="Pfam" id="PF00128">
    <property type="entry name" value="Alpha-amylase"/>
    <property type="match status" value="1"/>
</dbReference>
<dbReference type="Pfam" id="PF02922">
    <property type="entry name" value="CBM_48"/>
    <property type="match status" value="1"/>
</dbReference>
<dbReference type="Pfam" id="PF21331">
    <property type="entry name" value="Isoamylase_C"/>
    <property type="match status" value="1"/>
</dbReference>
<dbReference type="SMART" id="SM00642">
    <property type="entry name" value="Aamy"/>
    <property type="match status" value="1"/>
</dbReference>
<dbReference type="SUPFAM" id="SSF51445">
    <property type="entry name" value="(Trans)glycosidases"/>
    <property type="match status" value="1"/>
</dbReference>
<dbReference type="SUPFAM" id="SSF81296">
    <property type="entry name" value="E set domains"/>
    <property type="match status" value="1"/>
</dbReference>
<dbReference type="SUPFAM" id="SSF51011">
    <property type="entry name" value="Glycosyl hydrolase domain"/>
    <property type="match status" value="1"/>
</dbReference>
<organism>
    <name type="scientific">Pseudomonas sp. (strain SMP1)</name>
    <dbReference type="NCBI Taxonomy" id="72588"/>
    <lineage>
        <taxon>Bacteria</taxon>
        <taxon>Pseudomonadati</taxon>
        <taxon>Pseudomonadota</taxon>
    </lineage>
</organism>
<comment type="catalytic activity">
    <reaction>
        <text>Hydrolysis of (1-&gt;6)-alpha-D-glucosidic branch linkages in glycogen, amylopectin and their beta-limit dextrins.</text>
        <dbReference type="EC" id="3.2.1.68"/>
    </reaction>
</comment>
<comment type="cofactor">
    <cofactor evidence="1">
        <name>Ca(2+)</name>
        <dbReference type="ChEBI" id="CHEBI:29108"/>
    </cofactor>
    <text evidence="1">Binds 1 Ca(2+) ion per subunit.</text>
</comment>
<comment type="subunit">
    <text evidence="1">Monomer.</text>
</comment>
<comment type="induction">
    <text>By maltose.</text>
</comment>
<comment type="similarity">
    <text evidence="3">Belongs to the glycosyl hydrolase 13 family.</text>
</comment>
<protein>
    <recommendedName>
        <fullName>Isoamylase</fullName>
        <ecNumber>3.2.1.68</ecNumber>
    </recommendedName>
</protein>
<gene>
    <name type="primary">iam</name>
</gene>
<proteinExistence type="evidence at protein level"/>
<evidence type="ECO:0000250" key="1"/>
<evidence type="ECO:0000269" key="2">
    <source>
    </source>
</evidence>
<evidence type="ECO:0000305" key="3"/>
<name>ISOA_PSEUM</name>
<reference key="1">
    <citation type="journal article" date="1989" name="J. Gen. Microbiol.">
        <title>Cloning and nucleotide sequence of the isoamylase gene from a strain of Pseudomonas sp.</title>
        <authorList>
            <person name="Tognoni A."/>
            <person name="Carrera P."/>
            <person name="Galli G."/>
            <person name="Lucchese G."/>
            <person name="Camerini B."/>
            <person name="Grandi G."/>
        </authorList>
    </citation>
    <scope>NUCLEOTIDE SEQUENCE [GENOMIC DNA]</scope>
    <scope>PROTEIN SEQUENCE OF 27-44</scope>
</reference>